<keyword id="KW-0227">DNA damage</keyword>
<keyword id="KW-0234">DNA repair</keyword>
<keyword id="KW-0235">DNA replication</keyword>
<keyword id="KW-0436">Ligase</keyword>
<keyword id="KW-0460">Magnesium</keyword>
<keyword id="KW-0464">Manganese</keyword>
<keyword id="KW-0479">Metal-binding</keyword>
<keyword id="KW-0520">NAD</keyword>
<keyword id="KW-0862">Zinc</keyword>
<protein>
    <recommendedName>
        <fullName evidence="1">DNA ligase</fullName>
        <ecNumber evidence="1">6.5.1.2</ecNumber>
    </recommendedName>
    <alternativeName>
        <fullName evidence="1">Polydeoxyribonucleotide synthase [NAD(+)]</fullName>
    </alternativeName>
</protein>
<gene>
    <name evidence="1" type="primary">ligA</name>
    <name type="ordered locus">Csac_1733</name>
</gene>
<reference key="1">
    <citation type="submission" date="2007-04" db="EMBL/GenBank/DDBJ databases">
        <title>Genome sequence of the thermophilic hydrogen-producing bacterium Caldicellulosiruptor saccharolyticus DSM 8903.</title>
        <authorList>
            <person name="Copeland A."/>
            <person name="Lucas S."/>
            <person name="Lapidus A."/>
            <person name="Barry K."/>
            <person name="Detter J.C."/>
            <person name="Glavina del Rio T."/>
            <person name="Hammon N."/>
            <person name="Israni S."/>
            <person name="Dalin E."/>
            <person name="Tice H."/>
            <person name="Pitluck S."/>
            <person name="Kiss H."/>
            <person name="Brettin T."/>
            <person name="Bruce D."/>
            <person name="Han C."/>
            <person name="Schmutz J."/>
            <person name="Larimer F."/>
            <person name="Land M."/>
            <person name="Hauser L."/>
            <person name="Kyrpides N."/>
            <person name="Lykidis A."/>
            <person name="van de Werken H.J.G."/>
            <person name="Verhaart M.R.A."/>
            <person name="VanFossen A.L."/>
            <person name="Lewis D.L."/>
            <person name="Nichols J.D."/>
            <person name="Goorissen H.P."/>
            <person name="van Niel E.W.J."/>
            <person name="Stams F.J.M."/>
            <person name="Willquist K.U."/>
            <person name="Ward D.E."/>
            <person name="van der Oost J."/>
            <person name="Kelly R.M."/>
            <person name="Kengen S.M.W."/>
            <person name="Richardson P."/>
        </authorList>
    </citation>
    <scope>NUCLEOTIDE SEQUENCE [LARGE SCALE GENOMIC DNA]</scope>
    <source>
        <strain>ATCC 43494 / DSM 8903 / Tp8T 6331</strain>
    </source>
</reference>
<proteinExistence type="inferred from homology"/>
<evidence type="ECO:0000255" key="1">
    <source>
        <dbReference type="HAMAP-Rule" id="MF_01588"/>
    </source>
</evidence>
<feature type="chain" id="PRO_0000313173" description="DNA ligase">
    <location>
        <begin position="1"/>
        <end position="673"/>
    </location>
</feature>
<feature type="domain" description="BRCT" evidence="1">
    <location>
        <begin position="583"/>
        <end position="672"/>
    </location>
</feature>
<feature type="active site" description="N6-AMP-lysine intermediate" evidence="1">
    <location>
        <position position="115"/>
    </location>
</feature>
<feature type="binding site" evidence="1">
    <location>
        <begin position="33"/>
        <end position="37"/>
    </location>
    <ligand>
        <name>NAD(+)</name>
        <dbReference type="ChEBI" id="CHEBI:57540"/>
    </ligand>
</feature>
<feature type="binding site" evidence="1">
    <location>
        <begin position="82"/>
        <end position="83"/>
    </location>
    <ligand>
        <name>NAD(+)</name>
        <dbReference type="ChEBI" id="CHEBI:57540"/>
    </ligand>
</feature>
<feature type="binding site" evidence="1">
    <location>
        <position position="113"/>
    </location>
    <ligand>
        <name>NAD(+)</name>
        <dbReference type="ChEBI" id="CHEBI:57540"/>
    </ligand>
</feature>
<feature type="binding site" evidence="1">
    <location>
        <position position="136"/>
    </location>
    <ligand>
        <name>NAD(+)</name>
        <dbReference type="ChEBI" id="CHEBI:57540"/>
    </ligand>
</feature>
<feature type="binding site" evidence="1">
    <location>
        <position position="170"/>
    </location>
    <ligand>
        <name>NAD(+)</name>
        <dbReference type="ChEBI" id="CHEBI:57540"/>
    </ligand>
</feature>
<feature type="binding site" evidence="1">
    <location>
        <position position="285"/>
    </location>
    <ligand>
        <name>NAD(+)</name>
        <dbReference type="ChEBI" id="CHEBI:57540"/>
    </ligand>
</feature>
<feature type="binding site" evidence="1">
    <location>
        <position position="309"/>
    </location>
    <ligand>
        <name>NAD(+)</name>
        <dbReference type="ChEBI" id="CHEBI:57540"/>
    </ligand>
</feature>
<feature type="binding site" evidence="1">
    <location>
        <position position="403"/>
    </location>
    <ligand>
        <name>Zn(2+)</name>
        <dbReference type="ChEBI" id="CHEBI:29105"/>
    </ligand>
</feature>
<feature type="binding site" evidence="1">
    <location>
        <position position="406"/>
    </location>
    <ligand>
        <name>Zn(2+)</name>
        <dbReference type="ChEBI" id="CHEBI:29105"/>
    </ligand>
</feature>
<feature type="binding site" evidence="1">
    <location>
        <position position="421"/>
    </location>
    <ligand>
        <name>Zn(2+)</name>
        <dbReference type="ChEBI" id="CHEBI:29105"/>
    </ligand>
</feature>
<feature type="binding site" evidence="1">
    <location>
        <position position="426"/>
    </location>
    <ligand>
        <name>Zn(2+)</name>
        <dbReference type="ChEBI" id="CHEBI:29105"/>
    </ligand>
</feature>
<dbReference type="EC" id="6.5.1.2" evidence="1"/>
<dbReference type="EMBL" id="CP000679">
    <property type="protein sequence ID" value="ABP67320.1"/>
    <property type="molecule type" value="Genomic_DNA"/>
</dbReference>
<dbReference type="RefSeq" id="WP_011917254.1">
    <property type="nucleotide sequence ID" value="NC_009437.1"/>
</dbReference>
<dbReference type="SMR" id="A4XK85"/>
<dbReference type="STRING" id="351627.Csac_1733"/>
<dbReference type="KEGG" id="csc:Csac_1733"/>
<dbReference type="eggNOG" id="COG0272">
    <property type="taxonomic scope" value="Bacteria"/>
</dbReference>
<dbReference type="HOGENOM" id="CLU_007764_2_1_9"/>
<dbReference type="OrthoDB" id="9759736at2"/>
<dbReference type="Proteomes" id="UP000000256">
    <property type="component" value="Chromosome"/>
</dbReference>
<dbReference type="GO" id="GO:0005829">
    <property type="term" value="C:cytosol"/>
    <property type="evidence" value="ECO:0007669"/>
    <property type="project" value="TreeGrafter"/>
</dbReference>
<dbReference type="GO" id="GO:0003677">
    <property type="term" value="F:DNA binding"/>
    <property type="evidence" value="ECO:0007669"/>
    <property type="project" value="InterPro"/>
</dbReference>
<dbReference type="GO" id="GO:0003911">
    <property type="term" value="F:DNA ligase (NAD+) activity"/>
    <property type="evidence" value="ECO:0007669"/>
    <property type="project" value="UniProtKB-UniRule"/>
</dbReference>
<dbReference type="GO" id="GO:0046872">
    <property type="term" value="F:metal ion binding"/>
    <property type="evidence" value="ECO:0007669"/>
    <property type="project" value="UniProtKB-KW"/>
</dbReference>
<dbReference type="GO" id="GO:0006281">
    <property type="term" value="P:DNA repair"/>
    <property type="evidence" value="ECO:0007669"/>
    <property type="project" value="UniProtKB-KW"/>
</dbReference>
<dbReference type="GO" id="GO:0006260">
    <property type="term" value="P:DNA replication"/>
    <property type="evidence" value="ECO:0007669"/>
    <property type="project" value="UniProtKB-KW"/>
</dbReference>
<dbReference type="CDD" id="cd17748">
    <property type="entry name" value="BRCT_DNA_ligase_like"/>
    <property type="match status" value="1"/>
</dbReference>
<dbReference type="CDD" id="cd00114">
    <property type="entry name" value="LIGANc"/>
    <property type="match status" value="1"/>
</dbReference>
<dbReference type="FunFam" id="1.10.150.20:FF:000006">
    <property type="entry name" value="DNA ligase"/>
    <property type="match status" value="1"/>
</dbReference>
<dbReference type="FunFam" id="1.10.150.20:FF:000007">
    <property type="entry name" value="DNA ligase"/>
    <property type="match status" value="1"/>
</dbReference>
<dbReference type="FunFam" id="1.10.287.610:FF:000002">
    <property type="entry name" value="DNA ligase"/>
    <property type="match status" value="1"/>
</dbReference>
<dbReference type="FunFam" id="2.40.50.140:FF:000012">
    <property type="entry name" value="DNA ligase"/>
    <property type="match status" value="1"/>
</dbReference>
<dbReference type="FunFam" id="3.30.470.30:FF:000001">
    <property type="entry name" value="DNA ligase"/>
    <property type="match status" value="1"/>
</dbReference>
<dbReference type="Gene3D" id="6.20.10.30">
    <property type="match status" value="1"/>
</dbReference>
<dbReference type="Gene3D" id="1.10.150.20">
    <property type="entry name" value="5' to 3' exonuclease, C-terminal subdomain"/>
    <property type="match status" value="2"/>
</dbReference>
<dbReference type="Gene3D" id="3.40.50.10190">
    <property type="entry name" value="BRCT domain"/>
    <property type="match status" value="1"/>
</dbReference>
<dbReference type="Gene3D" id="3.30.470.30">
    <property type="entry name" value="DNA ligase/mRNA capping enzyme"/>
    <property type="match status" value="1"/>
</dbReference>
<dbReference type="Gene3D" id="1.10.287.610">
    <property type="entry name" value="Helix hairpin bin"/>
    <property type="match status" value="1"/>
</dbReference>
<dbReference type="Gene3D" id="2.40.50.140">
    <property type="entry name" value="Nucleic acid-binding proteins"/>
    <property type="match status" value="1"/>
</dbReference>
<dbReference type="HAMAP" id="MF_01588">
    <property type="entry name" value="DNA_ligase_A"/>
    <property type="match status" value="1"/>
</dbReference>
<dbReference type="InterPro" id="IPR001357">
    <property type="entry name" value="BRCT_dom"/>
</dbReference>
<dbReference type="InterPro" id="IPR036420">
    <property type="entry name" value="BRCT_dom_sf"/>
</dbReference>
<dbReference type="InterPro" id="IPR041663">
    <property type="entry name" value="DisA/LigA_HHH"/>
</dbReference>
<dbReference type="InterPro" id="IPR001679">
    <property type="entry name" value="DNA_ligase"/>
</dbReference>
<dbReference type="InterPro" id="IPR018239">
    <property type="entry name" value="DNA_ligase_AS"/>
</dbReference>
<dbReference type="InterPro" id="IPR033136">
    <property type="entry name" value="DNA_ligase_CS"/>
</dbReference>
<dbReference type="InterPro" id="IPR013839">
    <property type="entry name" value="DNAligase_adenylation"/>
</dbReference>
<dbReference type="InterPro" id="IPR013840">
    <property type="entry name" value="DNAligase_N"/>
</dbReference>
<dbReference type="InterPro" id="IPR003583">
    <property type="entry name" value="Hlx-hairpin-Hlx_DNA-bd_motif"/>
</dbReference>
<dbReference type="InterPro" id="IPR012340">
    <property type="entry name" value="NA-bd_OB-fold"/>
</dbReference>
<dbReference type="InterPro" id="IPR004150">
    <property type="entry name" value="NAD_DNA_ligase_OB"/>
</dbReference>
<dbReference type="InterPro" id="IPR010994">
    <property type="entry name" value="RuvA_2-like"/>
</dbReference>
<dbReference type="InterPro" id="IPR004149">
    <property type="entry name" value="Znf_DNAligase_C4"/>
</dbReference>
<dbReference type="NCBIfam" id="TIGR00575">
    <property type="entry name" value="dnlj"/>
    <property type="match status" value="1"/>
</dbReference>
<dbReference type="NCBIfam" id="NF005932">
    <property type="entry name" value="PRK07956.1"/>
    <property type="match status" value="1"/>
</dbReference>
<dbReference type="PANTHER" id="PTHR23389">
    <property type="entry name" value="CHROMOSOME TRANSMISSION FIDELITY FACTOR 18"/>
    <property type="match status" value="1"/>
</dbReference>
<dbReference type="PANTHER" id="PTHR23389:SF9">
    <property type="entry name" value="DNA LIGASE"/>
    <property type="match status" value="1"/>
</dbReference>
<dbReference type="Pfam" id="PF00533">
    <property type="entry name" value="BRCT"/>
    <property type="match status" value="1"/>
</dbReference>
<dbReference type="Pfam" id="PF01653">
    <property type="entry name" value="DNA_ligase_aden"/>
    <property type="match status" value="1"/>
</dbReference>
<dbReference type="Pfam" id="PF03120">
    <property type="entry name" value="DNA_ligase_OB"/>
    <property type="match status" value="1"/>
</dbReference>
<dbReference type="Pfam" id="PF03119">
    <property type="entry name" value="DNA_ligase_ZBD"/>
    <property type="match status" value="1"/>
</dbReference>
<dbReference type="Pfam" id="PF12826">
    <property type="entry name" value="HHH_2"/>
    <property type="match status" value="1"/>
</dbReference>
<dbReference type="Pfam" id="PF22745">
    <property type="entry name" value="Nlig-Ia"/>
    <property type="match status" value="1"/>
</dbReference>
<dbReference type="PIRSF" id="PIRSF001604">
    <property type="entry name" value="LigA"/>
    <property type="match status" value="1"/>
</dbReference>
<dbReference type="SMART" id="SM00292">
    <property type="entry name" value="BRCT"/>
    <property type="match status" value="1"/>
</dbReference>
<dbReference type="SMART" id="SM00278">
    <property type="entry name" value="HhH1"/>
    <property type="match status" value="4"/>
</dbReference>
<dbReference type="SMART" id="SM00532">
    <property type="entry name" value="LIGANc"/>
    <property type="match status" value="1"/>
</dbReference>
<dbReference type="SUPFAM" id="SSF52113">
    <property type="entry name" value="BRCT domain"/>
    <property type="match status" value="1"/>
</dbReference>
<dbReference type="SUPFAM" id="SSF56091">
    <property type="entry name" value="DNA ligase/mRNA capping enzyme, catalytic domain"/>
    <property type="match status" value="1"/>
</dbReference>
<dbReference type="SUPFAM" id="SSF50249">
    <property type="entry name" value="Nucleic acid-binding proteins"/>
    <property type="match status" value="1"/>
</dbReference>
<dbReference type="SUPFAM" id="SSF47781">
    <property type="entry name" value="RuvA domain 2-like"/>
    <property type="match status" value="1"/>
</dbReference>
<dbReference type="PROSITE" id="PS50172">
    <property type="entry name" value="BRCT"/>
    <property type="match status" value="1"/>
</dbReference>
<dbReference type="PROSITE" id="PS01055">
    <property type="entry name" value="DNA_LIGASE_N1"/>
    <property type="match status" value="1"/>
</dbReference>
<dbReference type="PROSITE" id="PS01056">
    <property type="entry name" value="DNA_LIGASE_N2"/>
    <property type="match status" value="1"/>
</dbReference>
<name>DNLJ_CALS8</name>
<accession>A4XK85</accession>
<sequence length="673" mass="76668">MSEFIKKRIRELVDLINYHDYKYYVEDNPEISDYEYDMLYRELVELEKQYPEYIFPDSPTQRVGGKVKEGFKEVVHRVPLLSLSNVFSEGELYDFDRRLRELLGTDDFNYVVEYKIDGLSVALEYENGLFVRGATRGDGNVGEDVTENLKTIRSIPLKLKDDINIVVRGEVFMPKDEFIKLNQEREENEEPLFANPRNAAAGSLRQLDPRITAQRKLDIFVFNVQWCEKELKTHDEALRYLKYLGFKVSPDYVVCSNIKEAYEAIKKVEEKRGLLPFEIDGAVVKLNQLALRDVAGSTAKSPRWAVAYKFPPEKKETKLIDIEVNVGRTGILTPTAVLEPVRISGSVVSRATLHNMDYIRQKDIRIGDTVVVQKAAEIIPEVVEVVFSKRTGNERIFEMPKKCPVCGADVIKFEDEVAYRCTGVECPAKSYRLILHFVSRDAMDIAGMGEMIVKNLFERGLIKTPADIYDLKFDDLVNLERFGVKSTNNLLKAIEASKKRPLDRLIFALGIRHIGQKAAKTLAEHISSIDDLFTITEEELLKLPDFGEKMAKSVVTFFRQDQTKHLIERLKKAGVNTVAEKKAKSDILKGYTFVLTGALSKYSRSQAKEILESLGARVSESVSKKTTAVIVGEDPGSKLTKAQELNVKILYEQDFERLISAKSHEEVEKILME</sequence>
<comment type="function">
    <text evidence="1">DNA ligase that catalyzes the formation of phosphodiester linkages between 5'-phosphoryl and 3'-hydroxyl groups in double-stranded DNA using NAD as a coenzyme and as the energy source for the reaction. It is essential for DNA replication and repair of damaged DNA.</text>
</comment>
<comment type="catalytic activity">
    <reaction evidence="1">
        <text>NAD(+) + (deoxyribonucleotide)n-3'-hydroxyl + 5'-phospho-(deoxyribonucleotide)m = (deoxyribonucleotide)n+m + AMP + beta-nicotinamide D-nucleotide.</text>
        <dbReference type="EC" id="6.5.1.2"/>
    </reaction>
</comment>
<comment type="cofactor">
    <cofactor evidence="1">
        <name>Mg(2+)</name>
        <dbReference type="ChEBI" id="CHEBI:18420"/>
    </cofactor>
    <cofactor evidence="1">
        <name>Mn(2+)</name>
        <dbReference type="ChEBI" id="CHEBI:29035"/>
    </cofactor>
</comment>
<comment type="similarity">
    <text evidence="1">Belongs to the NAD-dependent DNA ligase family. LigA subfamily.</text>
</comment>
<organism>
    <name type="scientific">Caldicellulosiruptor saccharolyticus (strain ATCC 43494 / DSM 8903 / Tp8T 6331)</name>
    <dbReference type="NCBI Taxonomy" id="351627"/>
    <lineage>
        <taxon>Bacteria</taxon>
        <taxon>Bacillati</taxon>
        <taxon>Bacillota</taxon>
        <taxon>Bacillota incertae sedis</taxon>
        <taxon>Caldicellulosiruptorales</taxon>
        <taxon>Caldicellulosiruptoraceae</taxon>
        <taxon>Caldicellulosiruptor</taxon>
    </lineage>
</organism>